<name>RS13_RICTY</name>
<feature type="chain" id="PRO_0000230561" description="Small ribosomal subunit protein uS13">
    <location>
        <begin position="1"/>
        <end position="125"/>
    </location>
</feature>
<keyword id="KW-0687">Ribonucleoprotein</keyword>
<keyword id="KW-0689">Ribosomal protein</keyword>
<keyword id="KW-0694">RNA-binding</keyword>
<keyword id="KW-0699">rRNA-binding</keyword>
<keyword id="KW-0820">tRNA-binding</keyword>
<accession>Q68WA0</accession>
<comment type="function">
    <text evidence="1">Located at the top of the head of the 30S subunit, it contacts several helices of the 16S rRNA. In the 70S ribosome it contacts the 23S rRNA (bridge B1a) and protein L5 of the 50S subunit (bridge B1b), connecting the 2 subunits; these bridges are implicated in subunit movement. Contacts the tRNAs in the A and P-sites.</text>
</comment>
<comment type="subunit">
    <text evidence="1">Part of the 30S ribosomal subunit. Forms a loose heterodimer with protein S19. Forms two bridges to the 50S subunit in the 70S ribosome.</text>
</comment>
<comment type="similarity">
    <text evidence="1">Belongs to the universal ribosomal protein uS13 family.</text>
</comment>
<sequence>MARIASVNIPDNKRLVVSLTYIYGLGSTMAAEICNKAKISRDKKVKVLTDQELIRLRNIIENEYKVEGDLRREVTLNIKKKKDIRCYQGLRHIRKLPVRGQNTHSNARTRKGKAIAIAGKKKTVK</sequence>
<organism>
    <name type="scientific">Rickettsia typhi (strain ATCC VR-144 / Wilmington)</name>
    <dbReference type="NCBI Taxonomy" id="257363"/>
    <lineage>
        <taxon>Bacteria</taxon>
        <taxon>Pseudomonadati</taxon>
        <taxon>Pseudomonadota</taxon>
        <taxon>Alphaproteobacteria</taxon>
        <taxon>Rickettsiales</taxon>
        <taxon>Rickettsiaceae</taxon>
        <taxon>Rickettsieae</taxon>
        <taxon>Rickettsia</taxon>
        <taxon>typhus group</taxon>
    </lineage>
</organism>
<gene>
    <name evidence="1" type="primary">rpsM</name>
    <name type="ordered locus">RT0629</name>
</gene>
<reference key="1">
    <citation type="journal article" date="2004" name="J. Bacteriol.">
        <title>Complete genome sequence of Rickettsia typhi and comparison with sequences of other Rickettsiae.</title>
        <authorList>
            <person name="McLeod M.P."/>
            <person name="Qin X."/>
            <person name="Karpathy S.E."/>
            <person name="Gioia J."/>
            <person name="Highlander S.K."/>
            <person name="Fox G.E."/>
            <person name="McNeill T.Z."/>
            <person name="Jiang H."/>
            <person name="Muzny D."/>
            <person name="Jacob L.S."/>
            <person name="Hawes A.C."/>
            <person name="Sodergren E."/>
            <person name="Gill R."/>
            <person name="Hume J."/>
            <person name="Morgan M."/>
            <person name="Fan G."/>
            <person name="Amin A.G."/>
            <person name="Gibbs R.A."/>
            <person name="Hong C."/>
            <person name="Yu X.-J."/>
            <person name="Walker D.H."/>
            <person name="Weinstock G.M."/>
        </authorList>
    </citation>
    <scope>NUCLEOTIDE SEQUENCE [LARGE SCALE GENOMIC DNA]</scope>
    <source>
        <strain>ATCC VR-144 / Wilmington</strain>
    </source>
</reference>
<protein>
    <recommendedName>
        <fullName evidence="1">Small ribosomal subunit protein uS13</fullName>
    </recommendedName>
    <alternativeName>
        <fullName evidence="2">30S ribosomal protein S13</fullName>
    </alternativeName>
</protein>
<evidence type="ECO:0000255" key="1">
    <source>
        <dbReference type="HAMAP-Rule" id="MF_01315"/>
    </source>
</evidence>
<evidence type="ECO:0000305" key="2"/>
<proteinExistence type="inferred from homology"/>
<dbReference type="EMBL" id="AE017197">
    <property type="protein sequence ID" value="AAU04092.1"/>
    <property type="molecule type" value="Genomic_DNA"/>
</dbReference>
<dbReference type="RefSeq" id="WP_011191071.1">
    <property type="nucleotide sequence ID" value="NC_006142.1"/>
</dbReference>
<dbReference type="SMR" id="Q68WA0"/>
<dbReference type="KEGG" id="rty:RT0629"/>
<dbReference type="eggNOG" id="COG0099">
    <property type="taxonomic scope" value="Bacteria"/>
</dbReference>
<dbReference type="HOGENOM" id="CLU_103849_1_2_5"/>
<dbReference type="OrthoDB" id="9803610at2"/>
<dbReference type="Proteomes" id="UP000000604">
    <property type="component" value="Chromosome"/>
</dbReference>
<dbReference type="GO" id="GO:0005829">
    <property type="term" value="C:cytosol"/>
    <property type="evidence" value="ECO:0007669"/>
    <property type="project" value="TreeGrafter"/>
</dbReference>
<dbReference type="GO" id="GO:0015935">
    <property type="term" value="C:small ribosomal subunit"/>
    <property type="evidence" value="ECO:0007669"/>
    <property type="project" value="TreeGrafter"/>
</dbReference>
<dbReference type="GO" id="GO:0019843">
    <property type="term" value="F:rRNA binding"/>
    <property type="evidence" value="ECO:0007669"/>
    <property type="project" value="UniProtKB-UniRule"/>
</dbReference>
<dbReference type="GO" id="GO:0003735">
    <property type="term" value="F:structural constituent of ribosome"/>
    <property type="evidence" value="ECO:0007669"/>
    <property type="project" value="InterPro"/>
</dbReference>
<dbReference type="GO" id="GO:0000049">
    <property type="term" value="F:tRNA binding"/>
    <property type="evidence" value="ECO:0007669"/>
    <property type="project" value="UniProtKB-UniRule"/>
</dbReference>
<dbReference type="GO" id="GO:0006412">
    <property type="term" value="P:translation"/>
    <property type="evidence" value="ECO:0007669"/>
    <property type="project" value="UniProtKB-UniRule"/>
</dbReference>
<dbReference type="FunFam" id="1.10.8.50:FF:000001">
    <property type="entry name" value="30S ribosomal protein S13"/>
    <property type="match status" value="1"/>
</dbReference>
<dbReference type="Gene3D" id="1.10.8.50">
    <property type="match status" value="1"/>
</dbReference>
<dbReference type="Gene3D" id="4.10.910.10">
    <property type="entry name" value="30s ribosomal protein s13, domain 2"/>
    <property type="match status" value="1"/>
</dbReference>
<dbReference type="HAMAP" id="MF_01315">
    <property type="entry name" value="Ribosomal_uS13"/>
    <property type="match status" value="1"/>
</dbReference>
<dbReference type="InterPro" id="IPR027437">
    <property type="entry name" value="Rbsml_uS13_C"/>
</dbReference>
<dbReference type="InterPro" id="IPR001892">
    <property type="entry name" value="Ribosomal_uS13"/>
</dbReference>
<dbReference type="InterPro" id="IPR010979">
    <property type="entry name" value="Ribosomal_uS13-like_H2TH"/>
</dbReference>
<dbReference type="InterPro" id="IPR019980">
    <property type="entry name" value="Ribosomal_uS13_bac-type"/>
</dbReference>
<dbReference type="InterPro" id="IPR018269">
    <property type="entry name" value="Ribosomal_uS13_CS"/>
</dbReference>
<dbReference type="NCBIfam" id="TIGR03631">
    <property type="entry name" value="uS13_bact"/>
    <property type="match status" value="1"/>
</dbReference>
<dbReference type="PANTHER" id="PTHR10871">
    <property type="entry name" value="30S RIBOSOMAL PROTEIN S13/40S RIBOSOMAL PROTEIN S18"/>
    <property type="match status" value="1"/>
</dbReference>
<dbReference type="PANTHER" id="PTHR10871:SF1">
    <property type="entry name" value="SMALL RIBOSOMAL SUBUNIT PROTEIN US13M"/>
    <property type="match status" value="1"/>
</dbReference>
<dbReference type="Pfam" id="PF00416">
    <property type="entry name" value="Ribosomal_S13"/>
    <property type="match status" value="1"/>
</dbReference>
<dbReference type="PIRSF" id="PIRSF002134">
    <property type="entry name" value="Ribosomal_S13"/>
    <property type="match status" value="1"/>
</dbReference>
<dbReference type="SUPFAM" id="SSF46946">
    <property type="entry name" value="S13-like H2TH domain"/>
    <property type="match status" value="1"/>
</dbReference>
<dbReference type="PROSITE" id="PS00646">
    <property type="entry name" value="RIBOSOMAL_S13_1"/>
    <property type="match status" value="1"/>
</dbReference>
<dbReference type="PROSITE" id="PS50159">
    <property type="entry name" value="RIBOSOMAL_S13_2"/>
    <property type="match status" value="1"/>
</dbReference>